<proteinExistence type="inferred from homology"/>
<evidence type="ECO:0000250" key="1"/>
<evidence type="ECO:0000256" key="2">
    <source>
        <dbReference type="SAM" id="MobiDB-lite"/>
    </source>
</evidence>
<evidence type="ECO:0000305" key="3"/>
<keyword id="KW-0010">Activator</keyword>
<keyword id="KW-0539">Nucleus</keyword>
<keyword id="KW-0804">Transcription</keyword>
<keyword id="KW-0805">Transcription regulation</keyword>
<gene>
    <name type="primary">SOH1</name>
    <name type="synonym">MED31</name>
    <name type="ordered locus">CNBN0710</name>
</gene>
<organism>
    <name type="scientific">Cryptococcus neoformans var. neoformans serotype D (strain B-3501A)</name>
    <name type="common">Filobasidiella neoformans</name>
    <dbReference type="NCBI Taxonomy" id="283643"/>
    <lineage>
        <taxon>Eukaryota</taxon>
        <taxon>Fungi</taxon>
        <taxon>Dikarya</taxon>
        <taxon>Basidiomycota</taxon>
        <taxon>Agaricomycotina</taxon>
        <taxon>Tremellomycetes</taxon>
        <taxon>Tremellales</taxon>
        <taxon>Cryptococcaceae</taxon>
        <taxon>Cryptococcus</taxon>
        <taxon>Cryptococcus neoformans species complex</taxon>
    </lineage>
</organism>
<accession>P0CS75</accession>
<accession>Q55HP9</accession>
<accession>Q5K785</accession>
<sequence length="180" mass="20703">MQALPTILPPPPLPDDSEAPARTPEKHANLVRFQSELEFIQCLAHPQYLHELHIQGYLGKPAFLNYLKYLEYWREPQYVRFIIYPTCLVYLTLLQTELFRSRLGDMGFITELMRVGSRHHATWRVGKPAEDKQSEEKPAVSMAPLDDDEEEDEPERGQETKGKRKKKKSRSGNVGAGQAL</sequence>
<dbReference type="EMBL" id="AAEY01000066">
    <property type="protein sequence ID" value="EAL17244.1"/>
    <property type="molecule type" value="Genomic_DNA"/>
</dbReference>
<dbReference type="RefSeq" id="XP_771891.1">
    <property type="nucleotide sequence ID" value="XM_766798.1"/>
</dbReference>
<dbReference type="SMR" id="P0CS75"/>
<dbReference type="EnsemblFungi" id="AAW47221">
    <property type="protein sequence ID" value="AAW47221"/>
    <property type="gene ID" value="CNN00730"/>
</dbReference>
<dbReference type="GeneID" id="4939680"/>
<dbReference type="KEGG" id="cnb:CNBN0710"/>
<dbReference type="VEuPathDB" id="FungiDB:CNBN0710"/>
<dbReference type="HOGENOM" id="CLU_1496138_0_0_1"/>
<dbReference type="OrthoDB" id="8592at5206"/>
<dbReference type="GO" id="GO:0016592">
    <property type="term" value="C:mediator complex"/>
    <property type="evidence" value="ECO:0007669"/>
    <property type="project" value="InterPro"/>
</dbReference>
<dbReference type="GO" id="GO:0003712">
    <property type="term" value="F:transcription coregulator activity"/>
    <property type="evidence" value="ECO:0007669"/>
    <property type="project" value="InterPro"/>
</dbReference>
<dbReference type="GO" id="GO:0006355">
    <property type="term" value="P:regulation of DNA-templated transcription"/>
    <property type="evidence" value="ECO:0007669"/>
    <property type="project" value="InterPro"/>
</dbReference>
<dbReference type="FunFam" id="1.10.10.1340:FF:000005">
    <property type="entry name" value="Mediator of RNA polymerase II transcription subunit 31"/>
    <property type="match status" value="1"/>
</dbReference>
<dbReference type="Gene3D" id="1.10.10.1340">
    <property type="entry name" value="Mediator of RNA polymerase II, submodule Med31 (Soh1)"/>
    <property type="match status" value="1"/>
</dbReference>
<dbReference type="InterPro" id="IPR038089">
    <property type="entry name" value="Med31_sf"/>
</dbReference>
<dbReference type="InterPro" id="IPR008831">
    <property type="entry name" value="Mediator_Med31"/>
</dbReference>
<dbReference type="PANTHER" id="PTHR13186">
    <property type="entry name" value="MEDIATOR OF RNA POLYMERASE II TRANSCRIPTION SUBUNIT 31"/>
    <property type="match status" value="1"/>
</dbReference>
<dbReference type="Pfam" id="PF05669">
    <property type="entry name" value="Med31"/>
    <property type="match status" value="1"/>
</dbReference>
<protein>
    <recommendedName>
        <fullName>Mediator of RNA polymerase II transcription subunit 31</fullName>
    </recommendedName>
    <alternativeName>
        <fullName>Mediator complex subunit 31</fullName>
    </alternativeName>
</protein>
<feature type="chain" id="PRO_0000410142" description="Mediator of RNA polymerase II transcription subunit 31">
    <location>
        <begin position="1"/>
        <end position="180"/>
    </location>
</feature>
<feature type="region of interest" description="Disordered" evidence="2">
    <location>
        <begin position="1"/>
        <end position="24"/>
    </location>
</feature>
<feature type="region of interest" description="Disordered" evidence="2">
    <location>
        <begin position="123"/>
        <end position="180"/>
    </location>
</feature>
<feature type="compositionally biased region" description="Basic and acidic residues" evidence="2">
    <location>
        <begin position="127"/>
        <end position="138"/>
    </location>
</feature>
<feature type="compositionally biased region" description="Acidic residues" evidence="2">
    <location>
        <begin position="145"/>
        <end position="154"/>
    </location>
</feature>
<reference key="1">
    <citation type="journal article" date="2005" name="Science">
        <title>The genome of the basidiomycetous yeast and human pathogen Cryptococcus neoformans.</title>
        <authorList>
            <person name="Loftus B.J."/>
            <person name="Fung E."/>
            <person name="Roncaglia P."/>
            <person name="Rowley D."/>
            <person name="Amedeo P."/>
            <person name="Bruno D."/>
            <person name="Vamathevan J."/>
            <person name="Miranda M."/>
            <person name="Anderson I.J."/>
            <person name="Fraser J.A."/>
            <person name="Allen J.E."/>
            <person name="Bosdet I.E."/>
            <person name="Brent M.R."/>
            <person name="Chiu R."/>
            <person name="Doering T.L."/>
            <person name="Donlin M.J."/>
            <person name="D'Souza C.A."/>
            <person name="Fox D.S."/>
            <person name="Grinberg V."/>
            <person name="Fu J."/>
            <person name="Fukushima M."/>
            <person name="Haas B.J."/>
            <person name="Huang J.C."/>
            <person name="Janbon G."/>
            <person name="Jones S.J.M."/>
            <person name="Koo H.L."/>
            <person name="Krzywinski M.I."/>
            <person name="Kwon-Chung K.J."/>
            <person name="Lengeler K.B."/>
            <person name="Maiti R."/>
            <person name="Marra M.A."/>
            <person name="Marra R.E."/>
            <person name="Mathewson C.A."/>
            <person name="Mitchell T.G."/>
            <person name="Pertea M."/>
            <person name="Riggs F.R."/>
            <person name="Salzberg S.L."/>
            <person name="Schein J.E."/>
            <person name="Shvartsbeyn A."/>
            <person name="Shin H."/>
            <person name="Shumway M."/>
            <person name="Specht C.A."/>
            <person name="Suh B.B."/>
            <person name="Tenney A."/>
            <person name="Utterback T.R."/>
            <person name="Wickes B.L."/>
            <person name="Wortman J.R."/>
            <person name="Wye N.H."/>
            <person name="Kronstad J.W."/>
            <person name="Lodge J.K."/>
            <person name="Heitman J."/>
            <person name="Davis R.W."/>
            <person name="Fraser C.M."/>
            <person name="Hyman R.W."/>
        </authorList>
    </citation>
    <scope>NUCLEOTIDE SEQUENCE [LARGE SCALE GENOMIC DNA]</scope>
    <source>
        <strain>B-3501A</strain>
    </source>
</reference>
<comment type="function">
    <text evidence="1">Component of the Mediator complex, a coactivator involved in the regulated transcription of nearly all RNA polymerase II-dependent genes. Mediator functions as a bridge to convey information from gene-specific regulatory proteins to the basal RNA polymerase II transcription machinery. Mediator is recruited to promoters by direct interactions with regulatory proteins and serves as a scaffold for the assembly of a functional preinitiation complex with RNA polymerase II and the general transcription factors (By similarity).</text>
</comment>
<comment type="subunit">
    <text evidence="1">Component of the Mediator complex.</text>
</comment>
<comment type="subcellular location">
    <subcellularLocation>
        <location evidence="1">Nucleus</location>
    </subcellularLocation>
</comment>
<comment type="similarity">
    <text evidence="3">Belongs to the Mediator complex subunit 31 family.</text>
</comment>
<name>MED31_CRYNB</name>